<sequence length="352" mass="40507">MDYQVSSPTYDIDYYTSEPCQKINVKQIAARLLPPLYSLVFIFGFVGNILVVLILINCKRLKSMTDIYLLNLAISDLLFLLTVPFWAHYAAAQWDFGNTMCQLLTGLYFIGFFSGIFFIILLTIDRYLAIVHAVFALKARTVTFGVVTSVITWVVAVFASLPGIIFTRSQREGLHYTCSSHFPYSQYQFWKNFQTLKMVILGLVLPLLVMVICYSGILKTLLRCRNEKKRHRAVRLIFTIMIVYFLFWAPYNIVLLLNTFQEFFGLNNCSSSNRLDQAMQVTETLGMTHCCINPIIYAFVGEKFRNYLLVFFQKHIAKRFCKCCSIFQQEAPERASSVYTRSTGEQEISVGL</sequence>
<protein>
    <recommendedName>
        <fullName>C-C chemokine receptor type 5</fullName>
        <shortName>C-C CKR-5</shortName>
        <shortName>CC-CKR-5</shortName>
        <shortName>CCR-5</shortName>
        <shortName>CCR5</shortName>
    </recommendedName>
    <cdAntigenName>CD195</cdAntigenName>
</protein>
<feature type="chain" id="PRO_0000069265" description="C-C chemokine receptor type 5">
    <location>
        <begin position="1"/>
        <end position="352"/>
    </location>
</feature>
<feature type="topological domain" description="Extracellular" evidence="3">
    <location>
        <begin position="1"/>
        <end position="30"/>
    </location>
</feature>
<feature type="transmembrane region" description="Helical; Name=1" evidence="3">
    <location>
        <begin position="31"/>
        <end position="58"/>
    </location>
</feature>
<feature type="topological domain" description="Cytoplasmic" evidence="3">
    <location>
        <begin position="59"/>
        <end position="68"/>
    </location>
</feature>
<feature type="transmembrane region" description="Helical; Name=2" evidence="3">
    <location>
        <begin position="69"/>
        <end position="89"/>
    </location>
</feature>
<feature type="topological domain" description="Extracellular" evidence="3">
    <location>
        <begin position="90"/>
        <end position="102"/>
    </location>
</feature>
<feature type="transmembrane region" description="Helical; Name=3" evidence="3">
    <location>
        <begin position="103"/>
        <end position="124"/>
    </location>
</feature>
<feature type="topological domain" description="Cytoplasmic" evidence="3">
    <location>
        <begin position="125"/>
        <end position="141"/>
    </location>
</feature>
<feature type="transmembrane region" description="Helical; Name=4" evidence="3">
    <location>
        <begin position="142"/>
        <end position="166"/>
    </location>
</feature>
<feature type="topological domain" description="Extracellular" evidence="3">
    <location>
        <begin position="167"/>
        <end position="198"/>
    </location>
</feature>
<feature type="transmembrane region" description="Helical; Name=5" evidence="3">
    <location>
        <begin position="199"/>
        <end position="218"/>
    </location>
</feature>
<feature type="topological domain" description="Cytoplasmic" evidence="3">
    <location>
        <begin position="219"/>
        <end position="235"/>
    </location>
</feature>
<feature type="transmembrane region" description="Helical; Name=6" evidence="3">
    <location>
        <begin position="236"/>
        <end position="260"/>
    </location>
</feature>
<feature type="topological domain" description="Extracellular" evidence="3">
    <location>
        <begin position="261"/>
        <end position="277"/>
    </location>
</feature>
<feature type="transmembrane region" description="Helical; Name=7" evidence="3">
    <location>
        <begin position="278"/>
        <end position="301"/>
    </location>
</feature>
<feature type="topological domain" description="Cytoplasmic" evidence="3">
    <location>
        <begin position="302"/>
        <end position="352"/>
    </location>
</feature>
<feature type="modified residue" description="Sulfotyrosine" evidence="1">
    <location>
        <position position="3"/>
    </location>
</feature>
<feature type="modified residue" description="Sulfotyrosine" evidence="3">
    <location>
        <position position="10"/>
    </location>
</feature>
<feature type="modified residue" description="Sulfotyrosine" evidence="3">
    <location>
        <position position="14"/>
    </location>
</feature>
<feature type="modified residue" description="Sulfotyrosine" evidence="3">
    <location>
        <position position="15"/>
    </location>
</feature>
<feature type="modified residue" description="Phosphoserine; by BARK1" evidence="1">
    <location>
        <position position="336"/>
    </location>
</feature>
<feature type="modified residue" description="Phosphoserine; by BARK1" evidence="1">
    <location>
        <position position="337"/>
    </location>
</feature>
<feature type="modified residue" description="Phosphoserine; by BARK1" evidence="1">
    <location>
        <position position="342"/>
    </location>
</feature>
<feature type="modified residue" description="Phosphoserine; by BARK1" evidence="1">
    <location>
        <position position="349"/>
    </location>
</feature>
<feature type="lipid moiety-binding region" description="S-palmitoyl cysteine" evidence="1">
    <location>
        <position position="321"/>
    </location>
</feature>
<feature type="lipid moiety-binding region" description="S-palmitoyl cysteine" evidence="1">
    <location>
        <position position="323"/>
    </location>
</feature>
<feature type="lipid moiety-binding region" description="S-palmitoyl cysteine" evidence="1">
    <location>
        <position position="324"/>
    </location>
</feature>
<feature type="glycosylation site" description="O-linked (GalNAc...) serine" evidence="1">
    <location>
        <position position="6"/>
    </location>
</feature>
<feature type="glycosylation site" description="O-linked (GalNAc...) serine" evidence="1">
    <location>
        <position position="7"/>
    </location>
</feature>
<feature type="disulfide bond" evidence="1">
    <location>
        <begin position="20"/>
        <end position="269"/>
    </location>
</feature>
<feature type="disulfide bond" evidence="4">
    <location>
        <begin position="101"/>
        <end position="178"/>
    </location>
</feature>
<organism>
    <name type="scientific">Macaca nemestrina</name>
    <name type="common">Pig-tailed macaque</name>
    <dbReference type="NCBI Taxonomy" id="9545"/>
    <lineage>
        <taxon>Eukaryota</taxon>
        <taxon>Metazoa</taxon>
        <taxon>Chordata</taxon>
        <taxon>Craniata</taxon>
        <taxon>Vertebrata</taxon>
        <taxon>Euteleostomi</taxon>
        <taxon>Mammalia</taxon>
        <taxon>Eutheria</taxon>
        <taxon>Euarchontoglires</taxon>
        <taxon>Primates</taxon>
        <taxon>Haplorrhini</taxon>
        <taxon>Catarrhini</taxon>
        <taxon>Cercopithecidae</taxon>
        <taxon>Cercopithecinae</taxon>
        <taxon>Macaca</taxon>
    </lineage>
</organism>
<evidence type="ECO:0000250" key="1">
    <source>
        <dbReference type="UniProtKB" id="P51681"/>
    </source>
</evidence>
<evidence type="ECO:0000250" key="2">
    <source>
        <dbReference type="UniProtKB" id="Q9XT76"/>
    </source>
</evidence>
<evidence type="ECO:0000255" key="3"/>
<evidence type="ECO:0000255" key="4">
    <source>
        <dbReference type="PROSITE-ProRule" id="PRU00521"/>
    </source>
</evidence>
<comment type="function">
    <text evidence="1">Receptor for a number of inflammatory CC-chemokines including CCL3/MIP-1-alpha, CCL4/MIP-1-beta and RANTES and subsequently transduces a signal by increasing the intracellular calcium ion level. May play a role in the control of granulocytic lineage proliferation or differentiation. Participates in T-lymphocyte migration to the infection site by acting as a chemotactic receptor.</text>
</comment>
<comment type="subunit">
    <text evidence="1">Interacts with PRAF2. Efficient ligand binding to CCL3/MIP-1alpha and CCL4/MIP-1beta requires sulfation, O-glycosylation and sialic acid modifications. Glycosylation on Ser-6 is required for efficient binding of CCL4. Interacts with GRK2. Interacts with ARRB1 and ARRB2. Interacts with CNIH4. Interacts with S100A4; this interaction stimulates T-lymphocyte chemotaxis.</text>
</comment>
<comment type="subcellular location">
    <subcellularLocation>
        <location evidence="2">Cell membrane</location>
        <topology evidence="2">Multi-pass membrane protein</topology>
    </subcellularLocation>
</comment>
<comment type="PTM">
    <text evidence="1">Sulfated on at least 2 of the N-terminal tyrosines. Sulfation is required for efficient binding of the chemokines, CCL3 and CCL4 (By similarity).</text>
</comment>
<comment type="PTM">
    <text evidence="1">Palmitoylation in the C-terminal is important for cell surface expression.</text>
</comment>
<comment type="PTM">
    <text evidence="1">Phosphorylation on serine residues in the C-terminal is stimulated by binding CC chemokines especially by APO-RANTES.</text>
</comment>
<comment type="PTM">
    <text evidence="1">O-glycosylated, but not N-glycosylated. Ser-6 appears to be the major site even if Ser-7 may be also O-glycosylated. Also sialylated glycans present which contribute to chemokine binding. Thr-16 and Ser-17 may also be glycosylated and, if so, with small moieties such as a T-antigen.</text>
</comment>
<comment type="similarity">
    <text evidence="4">Belongs to the G-protein coupled receptor 1 family.</text>
</comment>
<dbReference type="EMBL" id="AF005661">
    <property type="protein sequence ID" value="AAB62555.1"/>
    <property type="molecule type" value="Genomic_DNA"/>
</dbReference>
<dbReference type="RefSeq" id="NP_001295951.1">
    <property type="nucleotide sequence ID" value="NM_001309022.1"/>
</dbReference>
<dbReference type="SMR" id="P61815"/>
<dbReference type="STRING" id="9545.ENSMNEP00000012525"/>
<dbReference type="GlyCosmos" id="P61815">
    <property type="glycosylation" value="2 sites, No reported glycans"/>
</dbReference>
<dbReference type="GeneID" id="105480352"/>
<dbReference type="KEGG" id="mni:105480352"/>
<dbReference type="CTD" id="1234"/>
<dbReference type="Proteomes" id="UP000233120">
    <property type="component" value="Unassembled WGS sequence"/>
</dbReference>
<dbReference type="GO" id="GO:0005737">
    <property type="term" value="C:cytoplasm"/>
    <property type="evidence" value="ECO:0007669"/>
    <property type="project" value="TreeGrafter"/>
</dbReference>
<dbReference type="GO" id="GO:0009897">
    <property type="term" value="C:external side of plasma membrane"/>
    <property type="evidence" value="ECO:0000250"/>
    <property type="project" value="UniProtKB"/>
</dbReference>
<dbReference type="GO" id="GO:0016493">
    <property type="term" value="F:C-C chemokine receptor activity"/>
    <property type="evidence" value="ECO:0000250"/>
    <property type="project" value="UniProtKB"/>
</dbReference>
<dbReference type="GO" id="GO:0071791">
    <property type="term" value="F:chemokine (C-C motif) ligand 5 binding"/>
    <property type="evidence" value="ECO:0007669"/>
    <property type="project" value="TreeGrafter"/>
</dbReference>
<dbReference type="GO" id="GO:0019722">
    <property type="term" value="P:calcium-mediated signaling"/>
    <property type="evidence" value="ECO:0007669"/>
    <property type="project" value="TreeGrafter"/>
</dbReference>
<dbReference type="GO" id="GO:0060326">
    <property type="term" value="P:cell chemotaxis"/>
    <property type="evidence" value="ECO:0007669"/>
    <property type="project" value="TreeGrafter"/>
</dbReference>
<dbReference type="GO" id="GO:0006955">
    <property type="term" value="P:immune response"/>
    <property type="evidence" value="ECO:0007669"/>
    <property type="project" value="InterPro"/>
</dbReference>
<dbReference type="GO" id="GO:0006954">
    <property type="term" value="P:inflammatory response"/>
    <property type="evidence" value="ECO:0007669"/>
    <property type="project" value="InterPro"/>
</dbReference>
<dbReference type="GO" id="GO:0007204">
    <property type="term" value="P:positive regulation of cytosolic calcium ion concentration"/>
    <property type="evidence" value="ECO:0007669"/>
    <property type="project" value="TreeGrafter"/>
</dbReference>
<dbReference type="CDD" id="cd15184">
    <property type="entry name" value="7tmA_CCR5_CCR2"/>
    <property type="match status" value="1"/>
</dbReference>
<dbReference type="FunFam" id="1.20.1070.10:FF:000026">
    <property type="entry name" value="C-C chemokine receptor type 5"/>
    <property type="match status" value="1"/>
</dbReference>
<dbReference type="Gene3D" id="1.20.1070.10">
    <property type="entry name" value="Rhodopsin 7-helix transmembrane proteins"/>
    <property type="match status" value="1"/>
</dbReference>
<dbReference type="InterPro" id="IPR050119">
    <property type="entry name" value="CCR1-9-like"/>
</dbReference>
<dbReference type="InterPro" id="IPR002240">
    <property type="entry name" value="Chemokine_CCR5"/>
</dbReference>
<dbReference type="InterPro" id="IPR000355">
    <property type="entry name" value="Chemokine_rcpt"/>
</dbReference>
<dbReference type="InterPro" id="IPR000276">
    <property type="entry name" value="GPCR_Rhodpsn"/>
</dbReference>
<dbReference type="InterPro" id="IPR017452">
    <property type="entry name" value="GPCR_Rhodpsn_7TM"/>
</dbReference>
<dbReference type="PANTHER" id="PTHR10489:SF686">
    <property type="entry name" value="C-C CHEMOKINE RECEPTOR TYPE 5"/>
    <property type="match status" value="1"/>
</dbReference>
<dbReference type="PANTHER" id="PTHR10489">
    <property type="entry name" value="CELL ADHESION MOLECULE"/>
    <property type="match status" value="1"/>
</dbReference>
<dbReference type="Pfam" id="PF00001">
    <property type="entry name" value="7tm_1"/>
    <property type="match status" value="1"/>
</dbReference>
<dbReference type="PRINTS" id="PR00657">
    <property type="entry name" value="CCCHEMOKINER"/>
</dbReference>
<dbReference type="PRINTS" id="PR01110">
    <property type="entry name" value="CHEMOKINER5"/>
</dbReference>
<dbReference type="PRINTS" id="PR00237">
    <property type="entry name" value="GPCRRHODOPSN"/>
</dbReference>
<dbReference type="SUPFAM" id="SSF81321">
    <property type="entry name" value="Family A G protein-coupled receptor-like"/>
    <property type="match status" value="1"/>
</dbReference>
<dbReference type="PROSITE" id="PS00237">
    <property type="entry name" value="G_PROTEIN_RECEP_F1_1"/>
    <property type="match status" value="1"/>
</dbReference>
<dbReference type="PROSITE" id="PS50262">
    <property type="entry name" value="G_PROTEIN_RECEP_F1_2"/>
    <property type="match status" value="1"/>
</dbReference>
<accession>P61815</accession>
<accession>O02746</accession>
<accession>P79436</accession>
<gene>
    <name type="primary">CCR5</name>
    <name type="synonym">CMKBR5</name>
</gene>
<proteinExistence type="inferred from homology"/>
<keyword id="KW-1003">Cell membrane</keyword>
<keyword id="KW-1015">Disulfide bond</keyword>
<keyword id="KW-0297">G-protein coupled receptor</keyword>
<keyword id="KW-0325">Glycoprotein</keyword>
<keyword id="KW-0449">Lipoprotein</keyword>
<keyword id="KW-0472">Membrane</keyword>
<keyword id="KW-0564">Palmitate</keyword>
<keyword id="KW-0597">Phosphoprotein</keyword>
<keyword id="KW-0675">Receptor</keyword>
<keyword id="KW-1185">Reference proteome</keyword>
<keyword id="KW-0765">Sulfation</keyword>
<keyword id="KW-0807">Transducer</keyword>
<keyword id="KW-0812">Transmembrane</keyword>
<keyword id="KW-1133">Transmembrane helix</keyword>
<name>CCR5_MACNE</name>
<reference key="1">
    <citation type="journal article" date="1997" name="Proc. Natl. Acad. Sci. U.S.A.">
        <title>Differential utilization of CCR5 by macrophage and T cell tropic simian immunodeficiency virus strains.</title>
        <authorList>
            <person name="Edinger A.L."/>
            <person name="Amedee A."/>
            <person name="Miller K."/>
            <person name="Doranz B.J."/>
            <person name="Endres M."/>
            <person name="Sharron M."/>
            <person name="Samson M."/>
            <person name="Lu Z.-H."/>
            <person name="Clements J.E."/>
            <person name="Murphey-Corb M."/>
            <person name="Peiper S.C."/>
            <person name="Parmentier M."/>
            <person name="Broder C.C."/>
            <person name="Doms R.W."/>
        </authorList>
    </citation>
    <scope>NUCLEOTIDE SEQUENCE [GENOMIC DNA]</scope>
</reference>